<accession>A1B8E0</accession>
<sequence>MTDSRPVVTRFAPSPTGYLHIGGARTALFNWLFARGRNGKFLLRIEDTDRTRSTPEATEAILQGLRWLGLDWDGEPVSQFAGRERHAEVAHAMLENGTAYKCFSTTEEIEAFREQAKAEGRSTLFLSPWRDADPAGLPDAPYAIRLKAPRDGETVVRDAVQGDVTFGNAQLDDMVLLRSDGTPTYMLAVVVDDHDMGVTHVIRGDDHLTNAARQIQIYQAMGWDIPVFAHIPLIHGTDGKKLSKRHGAVGLHEYAAMGYPAAAMRNYLARLGWSHGDDELFDDAQAKAWFDLDGIGKAPARLDFKKLEHVSGWHIARMDDVELLDEIADFRAATGAEPLSERQVARLRPALGALKTKAKTLPALLEQAHFALIDRPVQIEEKAAAALDIVSRSILKELTAAVQNASWGRDELEAAAKQIGESHGLGLGKVAAPLRAALAGRSSTPSVFDMMLALGRDETLARMQDQAG</sequence>
<proteinExistence type="inferred from homology"/>
<evidence type="ECO:0000255" key="1">
    <source>
        <dbReference type="HAMAP-Rule" id="MF_00022"/>
    </source>
</evidence>
<comment type="function">
    <text evidence="1">Catalyzes the attachment of glutamate to tRNA(Glu) in a two-step reaction: glutamate is first activated by ATP to form Glu-AMP and then transferred to the acceptor end of tRNA(Glu).</text>
</comment>
<comment type="catalytic activity">
    <reaction evidence="1">
        <text>tRNA(Glu) + L-glutamate + ATP = L-glutamyl-tRNA(Glu) + AMP + diphosphate</text>
        <dbReference type="Rhea" id="RHEA:23540"/>
        <dbReference type="Rhea" id="RHEA-COMP:9663"/>
        <dbReference type="Rhea" id="RHEA-COMP:9680"/>
        <dbReference type="ChEBI" id="CHEBI:29985"/>
        <dbReference type="ChEBI" id="CHEBI:30616"/>
        <dbReference type="ChEBI" id="CHEBI:33019"/>
        <dbReference type="ChEBI" id="CHEBI:78442"/>
        <dbReference type="ChEBI" id="CHEBI:78520"/>
        <dbReference type="ChEBI" id="CHEBI:456215"/>
        <dbReference type="EC" id="6.1.1.17"/>
    </reaction>
</comment>
<comment type="subunit">
    <text evidence="1">Monomer.</text>
</comment>
<comment type="subcellular location">
    <subcellularLocation>
        <location evidence="1">Cytoplasm</location>
    </subcellularLocation>
</comment>
<comment type="similarity">
    <text evidence="1">Belongs to the class-I aminoacyl-tRNA synthetase family. Glutamate--tRNA ligase type 1 subfamily.</text>
</comment>
<organism>
    <name type="scientific">Paracoccus denitrificans (strain Pd 1222)</name>
    <dbReference type="NCBI Taxonomy" id="318586"/>
    <lineage>
        <taxon>Bacteria</taxon>
        <taxon>Pseudomonadati</taxon>
        <taxon>Pseudomonadota</taxon>
        <taxon>Alphaproteobacteria</taxon>
        <taxon>Rhodobacterales</taxon>
        <taxon>Paracoccaceae</taxon>
        <taxon>Paracoccus</taxon>
    </lineage>
</organism>
<dbReference type="EC" id="6.1.1.17" evidence="1"/>
<dbReference type="EMBL" id="CP000490">
    <property type="protein sequence ID" value="ABL71784.1"/>
    <property type="molecule type" value="Genomic_DNA"/>
</dbReference>
<dbReference type="RefSeq" id="WP_011749953.1">
    <property type="nucleotide sequence ID" value="NC_008687.1"/>
</dbReference>
<dbReference type="SMR" id="A1B8E0"/>
<dbReference type="STRING" id="318586.Pden_3717"/>
<dbReference type="EnsemblBacteria" id="ABL71784">
    <property type="protein sequence ID" value="ABL71784"/>
    <property type="gene ID" value="Pden_3717"/>
</dbReference>
<dbReference type="GeneID" id="93453375"/>
<dbReference type="KEGG" id="pde:Pden_3717"/>
<dbReference type="eggNOG" id="COG0008">
    <property type="taxonomic scope" value="Bacteria"/>
</dbReference>
<dbReference type="HOGENOM" id="CLU_015768_6_0_5"/>
<dbReference type="OrthoDB" id="9807503at2"/>
<dbReference type="Proteomes" id="UP000000361">
    <property type="component" value="Chromosome 2"/>
</dbReference>
<dbReference type="GO" id="GO:0005829">
    <property type="term" value="C:cytosol"/>
    <property type="evidence" value="ECO:0007669"/>
    <property type="project" value="TreeGrafter"/>
</dbReference>
<dbReference type="GO" id="GO:0005524">
    <property type="term" value="F:ATP binding"/>
    <property type="evidence" value="ECO:0007669"/>
    <property type="project" value="UniProtKB-UniRule"/>
</dbReference>
<dbReference type="GO" id="GO:0004818">
    <property type="term" value="F:glutamate-tRNA ligase activity"/>
    <property type="evidence" value="ECO:0007669"/>
    <property type="project" value="UniProtKB-UniRule"/>
</dbReference>
<dbReference type="GO" id="GO:0000049">
    <property type="term" value="F:tRNA binding"/>
    <property type="evidence" value="ECO:0007669"/>
    <property type="project" value="InterPro"/>
</dbReference>
<dbReference type="GO" id="GO:0008270">
    <property type="term" value="F:zinc ion binding"/>
    <property type="evidence" value="ECO:0007669"/>
    <property type="project" value="InterPro"/>
</dbReference>
<dbReference type="GO" id="GO:0006424">
    <property type="term" value="P:glutamyl-tRNA aminoacylation"/>
    <property type="evidence" value="ECO:0007669"/>
    <property type="project" value="UniProtKB-UniRule"/>
</dbReference>
<dbReference type="CDD" id="cd00808">
    <property type="entry name" value="GluRS_core"/>
    <property type="match status" value="1"/>
</dbReference>
<dbReference type="FunFam" id="3.40.50.620:FF:000007">
    <property type="entry name" value="Glutamate--tRNA ligase"/>
    <property type="match status" value="1"/>
</dbReference>
<dbReference type="Gene3D" id="1.10.10.350">
    <property type="match status" value="1"/>
</dbReference>
<dbReference type="Gene3D" id="3.40.50.620">
    <property type="entry name" value="HUPs"/>
    <property type="match status" value="1"/>
</dbReference>
<dbReference type="HAMAP" id="MF_00022">
    <property type="entry name" value="Glu_tRNA_synth_type1"/>
    <property type="match status" value="1"/>
</dbReference>
<dbReference type="InterPro" id="IPR045462">
    <property type="entry name" value="aa-tRNA-synth_I_cd-bd"/>
</dbReference>
<dbReference type="InterPro" id="IPR020751">
    <property type="entry name" value="aa-tRNA-synth_I_codon-bd_sub2"/>
</dbReference>
<dbReference type="InterPro" id="IPR001412">
    <property type="entry name" value="aa-tRNA-synth_I_CS"/>
</dbReference>
<dbReference type="InterPro" id="IPR008925">
    <property type="entry name" value="aa_tRNA-synth_I_cd-bd_sf"/>
</dbReference>
<dbReference type="InterPro" id="IPR004527">
    <property type="entry name" value="Glu-tRNA-ligase_bac/mito"/>
</dbReference>
<dbReference type="InterPro" id="IPR000924">
    <property type="entry name" value="Glu/Gln-tRNA-synth"/>
</dbReference>
<dbReference type="InterPro" id="IPR020058">
    <property type="entry name" value="Glu/Gln-tRNA-synth_Ib_cat-dom"/>
</dbReference>
<dbReference type="InterPro" id="IPR049940">
    <property type="entry name" value="GluQ/Sye"/>
</dbReference>
<dbReference type="InterPro" id="IPR033910">
    <property type="entry name" value="GluRS_core"/>
</dbReference>
<dbReference type="InterPro" id="IPR014729">
    <property type="entry name" value="Rossmann-like_a/b/a_fold"/>
</dbReference>
<dbReference type="NCBIfam" id="TIGR00464">
    <property type="entry name" value="gltX_bact"/>
    <property type="match status" value="1"/>
</dbReference>
<dbReference type="PANTHER" id="PTHR43311">
    <property type="entry name" value="GLUTAMATE--TRNA LIGASE"/>
    <property type="match status" value="1"/>
</dbReference>
<dbReference type="PANTHER" id="PTHR43311:SF2">
    <property type="entry name" value="GLUTAMATE--TRNA LIGASE, MITOCHONDRIAL-RELATED"/>
    <property type="match status" value="1"/>
</dbReference>
<dbReference type="Pfam" id="PF19269">
    <property type="entry name" value="Anticodon_2"/>
    <property type="match status" value="1"/>
</dbReference>
<dbReference type="Pfam" id="PF00749">
    <property type="entry name" value="tRNA-synt_1c"/>
    <property type="match status" value="1"/>
</dbReference>
<dbReference type="PRINTS" id="PR00987">
    <property type="entry name" value="TRNASYNTHGLU"/>
</dbReference>
<dbReference type="SUPFAM" id="SSF48163">
    <property type="entry name" value="An anticodon-binding domain of class I aminoacyl-tRNA synthetases"/>
    <property type="match status" value="1"/>
</dbReference>
<dbReference type="SUPFAM" id="SSF52374">
    <property type="entry name" value="Nucleotidylyl transferase"/>
    <property type="match status" value="1"/>
</dbReference>
<dbReference type="PROSITE" id="PS00178">
    <property type="entry name" value="AA_TRNA_LIGASE_I"/>
    <property type="match status" value="1"/>
</dbReference>
<protein>
    <recommendedName>
        <fullName evidence="1">Glutamate--tRNA ligase 2</fullName>
        <ecNumber evidence="1">6.1.1.17</ecNumber>
    </recommendedName>
    <alternativeName>
        <fullName evidence="1">Glutamyl-tRNA synthetase 2</fullName>
        <shortName evidence="1">GluRS 2</shortName>
    </alternativeName>
</protein>
<gene>
    <name evidence="1" type="primary">gltX2</name>
    <name type="ordered locus">Pden_3717</name>
</gene>
<reference key="1">
    <citation type="submission" date="2006-12" db="EMBL/GenBank/DDBJ databases">
        <title>Complete sequence of chromosome 2 of Paracoccus denitrificans PD1222.</title>
        <authorList>
            <person name="Copeland A."/>
            <person name="Lucas S."/>
            <person name="Lapidus A."/>
            <person name="Barry K."/>
            <person name="Detter J.C."/>
            <person name="Glavina del Rio T."/>
            <person name="Hammon N."/>
            <person name="Israni S."/>
            <person name="Dalin E."/>
            <person name="Tice H."/>
            <person name="Pitluck S."/>
            <person name="Munk A.C."/>
            <person name="Brettin T."/>
            <person name="Bruce D."/>
            <person name="Han C."/>
            <person name="Tapia R."/>
            <person name="Gilna P."/>
            <person name="Schmutz J."/>
            <person name="Larimer F."/>
            <person name="Land M."/>
            <person name="Hauser L."/>
            <person name="Kyrpides N."/>
            <person name="Lykidis A."/>
            <person name="Spiro S."/>
            <person name="Richardson D.J."/>
            <person name="Moir J.W.B."/>
            <person name="Ferguson S.J."/>
            <person name="van Spanning R.J.M."/>
            <person name="Richardson P."/>
        </authorList>
    </citation>
    <scope>NUCLEOTIDE SEQUENCE [LARGE SCALE GENOMIC DNA]</scope>
    <source>
        <strain>Pd 1222</strain>
    </source>
</reference>
<name>SYE2_PARDP</name>
<keyword id="KW-0030">Aminoacyl-tRNA synthetase</keyword>
<keyword id="KW-0067">ATP-binding</keyword>
<keyword id="KW-0963">Cytoplasm</keyword>
<keyword id="KW-0436">Ligase</keyword>
<keyword id="KW-0547">Nucleotide-binding</keyword>
<keyword id="KW-0648">Protein biosynthesis</keyword>
<keyword id="KW-1185">Reference proteome</keyword>
<feature type="chain" id="PRO_0000330987" description="Glutamate--tRNA ligase 2">
    <location>
        <begin position="1"/>
        <end position="468"/>
    </location>
</feature>
<feature type="short sequence motif" description="'HIGH' region" evidence="1">
    <location>
        <begin position="13"/>
        <end position="23"/>
    </location>
</feature>
<feature type="short sequence motif" description="'KMSKS' region" evidence="1">
    <location>
        <begin position="241"/>
        <end position="245"/>
    </location>
</feature>
<feature type="binding site" evidence="1">
    <location>
        <position position="244"/>
    </location>
    <ligand>
        <name>ATP</name>
        <dbReference type="ChEBI" id="CHEBI:30616"/>
    </ligand>
</feature>